<dbReference type="EMBL" id="EU827799">
    <property type="protein sequence ID" value="ACF07999.1"/>
    <property type="molecule type" value="mRNA"/>
</dbReference>
<dbReference type="GO" id="GO:0005576">
    <property type="term" value="C:extracellular region"/>
    <property type="evidence" value="ECO:0000314"/>
    <property type="project" value="UniProtKB"/>
</dbReference>
<dbReference type="GO" id="GO:0050829">
    <property type="term" value="P:defense response to Gram-negative bacterium"/>
    <property type="evidence" value="ECO:0000314"/>
    <property type="project" value="UniProtKB"/>
</dbReference>
<dbReference type="GO" id="GO:0050830">
    <property type="term" value="P:defense response to Gram-positive bacterium"/>
    <property type="evidence" value="ECO:0000314"/>
    <property type="project" value="UniProtKB"/>
</dbReference>
<dbReference type="GO" id="GO:0031640">
    <property type="term" value="P:killing of cells of another organism"/>
    <property type="evidence" value="ECO:0007669"/>
    <property type="project" value="UniProtKB-KW"/>
</dbReference>
<dbReference type="InterPro" id="IPR012520">
    <property type="entry name" value="Antimicrobial_frog_1"/>
</dbReference>
<dbReference type="InterPro" id="IPR004275">
    <property type="entry name" value="Frog_antimicrobial_propeptide"/>
</dbReference>
<dbReference type="Pfam" id="PF08018">
    <property type="entry name" value="Antimicrobial_1"/>
    <property type="match status" value="1"/>
</dbReference>
<dbReference type="Pfam" id="PF03032">
    <property type="entry name" value="FSAP_sig_propep"/>
    <property type="match status" value="1"/>
</dbReference>
<protein>
    <recommendedName>
        <fullName>Brevinin-1DYb</fullName>
    </recommendedName>
    <alternativeName>
        <fullName>Brevinin-1CDYb</fullName>
    </alternativeName>
</protein>
<keyword id="KW-0878">Amphibian defense peptide</keyword>
<keyword id="KW-0044">Antibiotic</keyword>
<keyword id="KW-0929">Antimicrobial</keyword>
<keyword id="KW-0165">Cleavage on pair of basic residues</keyword>
<keyword id="KW-0204">Cytolysis</keyword>
<keyword id="KW-0903">Direct protein sequencing</keyword>
<keyword id="KW-1015">Disulfide bond</keyword>
<keyword id="KW-0354">Hemolysis</keyword>
<keyword id="KW-0964">Secreted</keyword>
<keyword id="KW-0732">Signal</keyword>
<organism>
    <name type="scientific">Rana dybowskii</name>
    <name type="common">Dybovsky's frog</name>
    <name type="synonym">Korean brown frog</name>
    <dbReference type="NCBI Taxonomy" id="71582"/>
    <lineage>
        <taxon>Eukaryota</taxon>
        <taxon>Metazoa</taxon>
        <taxon>Chordata</taxon>
        <taxon>Craniata</taxon>
        <taxon>Vertebrata</taxon>
        <taxon>Euteleostomi</taxon>
        <taxon>Amphibia</taxon>
        <taxon>Batrachia</taxon>
        <taxon>Anura</taxon>
        <taxon>Neobatrachia</taxon>
        <taxon>Ranoidea</taxon>
        <taxon>Ranidae</taxon>
        <taxon>Rana</taxon>
        <taxon>Rana</taxon>
    </lineage>
</organism>
<reference key="1">
    <citation type="journal article" date="2009" name="Comp. Biochem. Physiol.">
        <title>Characterization of antimicrobial peptides isolated from the skin of the Chinese frog, Rana dybowskii.</title>
        <authorList>
            <person name="Jin L.-L."/>
            <person name="Li Q."/>
            <person name="Song S.-S."/>
            <person name="Feng K."/>
            <person name="Zhang D.-B."/>
            <person name="Wang Q.-Y."/>
            <person name="Chen Y.-H."/>
        </authorList>
    </citation>
    <scope>NUCLEOTIDE SEQUENCE [MRNA]</scope>
    <scope>TISSUE SPECIFICITY</scope>
    <source>
        <tissue>Skin</tissue>
    </source>
</reference>
<reference key="2">
    <citation type="journal article" date="2007" name="Toxicon">
        <title>Cytolytic peptides belonging to the brevinin-1 and brevinin-2 families isolated from the skin of the Japanese brown frog, Rana dybowskii.</title>
        <authorList>
            <person name="Conlon J.M."/>
            <person name="Kolodziejek J."/>
            <person name="Nowotny N."/>
            <person name="Leprince J."/>
            <person name="Vaudry H."/>
            <person name="Coquet L."/>
            <person name="Jouenne T."/>
            <person name="Iwamuro S."/>
        </authorList>
    </citation>
    <scope>PROTEIN SEQUENCE OF 47-66</scope>
    <scope>FUNCTION</scope>
    <scope>SUBCELLULAR LOCATION</scope>
    <scope>TISSUE SPECIFICITY</scope>
    <scope>MASS SPECTROMETRY</scope>
    <source>
        <tissue>Skin secretion</tissue>
    </source>
</reference>
<proteinExistence type="evidence at protein level"/>
<evidence type="ECO:0000250" key="1"/>
<evidence type="ECO:0000255" key="2"/>
<evidence type="ECO:0000269" key="3">
    <source>
    </source>
</evidence>
<evidence type="ECO:0000269" key="4">
    <source>
    </source>
</evidence>
<evidence type="ECO:0000305" key="5"/>
<comment type="function">
    <text evidence="3">Antimicrobial peptide. Has low activity against the Gram-positive bacterium S.aureus and the Gram-negative bacterium E.coli (MIC&lt;15 uM). Has a strong hemolytic activity.</text>
</comment>
<comment type="subcellular location">
    <subcellularLocation>
        <location evidence="3">Secreted</location>
    </subcellularLocation>
</comment>
<comment type="tissue specificity">
    <text evidence="3 4">Expressed by the skin glands.</text>
</comment>
<comment type="mass spectrometry"/>
<comment type="similarity">
    <text evidence="5">Belongs to the frog skin active peptide (FSAP) family. Brevinin subfamily.</text>
</comment>
<name>BR1B_RANDY</name>
<feature type="signal peptide" evidence="2">
    <location>
        <begin position="1"/>
        <end position="22"/>
    </location>
</feature>
<feature type="propeptide" id="PRO_0000391360">
    <location>
        <begin position="23"/>
        <end position="44"/>
    </location>
</feature>
<feature type="peptide" id="PRO_5000381473" description="Brevinin-1DYb">
    <location>
        <begin position="47"/>
        <end position="66"/>
    </location>
</feature>
<feature type="disulfide bond" evidence="1">
    <location>
        <begin position="60"/>
        <end position="66"/>
    </location>
</feature>
<sequence>MFTLKKSLLLLFFLGTISLSLCEEERNAEEERRDYPEERDVEVEKRFLSLALAALPKLFCLIFKKC</sequence>
<accession>P0C5W7</accession>
<accession>B3VZT9</accession>